<sequence length="192" mass="22698">MPKYYCEYCDIYLTHSSPVGRRQHNQGRKHISAKIEYFQNLLREEGITPQNFLGFLGSQAYNNILSNPMMNNFMHGNYNGYMKYNPMRNYHHSNRNPNYQHSVGMHNNKYSRAGYVPPGANKYPNNNFHNNKRISNTPKPYNNYTNKPITNSPYKNDKQDYRNNNENSNNFSNYQMNKDNSNFVNKNSEQPN</sequence>
<protein>
    <recommendedName>
        <fullName evidence="1">U1 small nuclear ribonucleoprotein C</fullName>
        <shortName evidence="1">U1 snRNP C</shortName>
        <shortName evidence="1">U1-C</shortName>
        <shortName evidence="1">U1C</shortName>
    </recommendedName>
</protein>
<dbReference type="EMBL" id="LK022891">
    <property type="protein sequence ID" value="VTZ70943.1"/>
    <property type="molecule type" value="Genomic_DNA"/>
</dbReference>
<dbReference type="EMBL" id="LT608180">
    <property type="protein sequence ID" value="SCM26240.1"/>
    <property type="molecule type" value="Genomic_DNA"/>
</dbReference>
<dbReference type="EMBL" id="LT608166">
    <property type="protein sequence ID" value="SCN62991.1"/>
    <property type="molecule type" value="Genomic_DNA"/>
</dbReference>
<dbReference type="RefSeq" id="XP_741777.2">
    <property type="nucleotide sequence ID" value="XM_736684.2"/>
</dbReference>
<dbReference type="SMR" id="Q4XRM7"/>
<dbReference type="EnsemblProtists" id="CDR16635">
    <property type="protein sequence ID" value="CDR16635"/>
    <property type="gene ID" value="PCHAS_142660"/>
</dbReference>
<dbReference type="GeneID" id="3494861"/>
<dbReference type="KEGG" id="pcb:PCHAS_1426600"/>
<dbReference type="VEuPathDB" id="PlasmoDB:PCHAS_1426600"/>
<dbReference type="eggNOG" id="KOG3454">
    <property type="taxonomic scope" value="Eukaryota"/>
</dbReference>
<dbReference type="HOGENOM" id="CLU_106083_0_0_1"/>
<dbReference type="OrthoDB" id="371026at2759"/>
<dbReference type="Proteomes" id="UP000071118">
    <property type="component" value="Chromosome 14"/>
</dbReference>
<dbReference type="Proteomes" id="UP000195489">
    <property type="component" value="Chromosome 14"/>
</dbReference>
<dbReference type="Proteomes" id="UP000507163">
    <property type="component" value="Chromosome 14"/>
</dbReference>
<dbReference type="GO" id="GO:0000243">
    <property type="term" value="C:commitment complex"/>
    <property type="evidence" value="ECO:0007669"/>
    <property type="project" value="UniProtKB-UniRule"/>
</dbReference>
<dbReference type="GO" id="GO:0005685">
    <property type="term" value="C:U1 snRNP"/>
    <property type="evidence" value="ECO:0007669"/>
    <property type="project" value="UniProtKB-UniRule"/>
</dbReference>
<dbReference type="GO" id="GO:0071004">
    <property type="term" value="C:U2-type prespliceosome"/>
    <property type="evidence" value="ECO:0007669"/>
    <property type="project" value="UniProtKB-UniRule"/>
</dbReference>
<dbReference type="GO" id="GO:0003729">
    <property type="term" value="F:mRNA binding"/>
    <property type="evidence" value="ECO:0007669"/>
    <property type="project" value="UniProtKB-UniRule"/>
</dbReference>
<dbReference type="GO" id="GO:0030627">
    <property type="term" value="F:pre-mRNA 5'-splice site binding"/>
    <property type="evidence" value="ECO:0007669"/>
    <property type="project" value="InterPro"/>
</dbReference>
<dbReference type="GO" id="GO:0030619">
    <property type="term" value="F:U1 snRNA binding"/>
    <property type="evidence" value="ECO:0007669"/>
    <property type="project" value="UniProtKB-UniRule"/>
</dbReference>
<dbReference type="GO" id="GO:0008270">
    <property type="term" value="F:zinc ion binding"/>
    <property type="evidence" value="ECO:0007669"/>
    <property type="project" value="UniProtKB-UniRule"/>
</dbReference>
<dbReference type="GO" id="GO:0000395">
    <property type="term" value="P:mRNA 5'-splice site recognition"/>
    <property type="evidence" value="ECO:0007669"/>
    <property type="project" value="UniProtKB-UniRule"/>
</dbReference>
<dbReference type="GO" id="GO:0000387">
    <property type="term" value="P:spliceosomal snRNP assembly"/>
    <property type="evidence" value="ECO:0007669"/>
    <property type="project" value="UniProtKB-UniRule"/>
</dbReference>
<dbReference type="FunFam" id="3.30.160.60:FF:000890">
    <property type="entry name" value="U1 small nuclear ribonucleoprotein C"/>
    <property type="match status" value="1"/>
</dbReference>
<dbReference type="Gene3D" id="3.30.160.60">
    <property type="entry name" value="Classic Zinc Finger"/>
    <property type="match status" value="1"/>
</dbReference>
<dbReference type="HAMAP" id="MF_03153">
    <property type="entry name" value="U1_C"/>
    <property type="match status" value="1"/>
</dbReference>
<dbReference type="InterPro" id="IPR000690">
    <property type="entry name" value="Matrin/U1-C_Znf_C2H2"/>
</dbReference>
<dbReference type="InterPro" id="IPR003604">
    <property type="entry name" value="Matrin/U1-like-C_Znf_C2H2"/>
</dbReference>
<dbReference type="InterPro" id="IPR013085">
    <property type="entry name" value="U1-CZ_Znf_C2H2"/>
</dbReference>
<dbReference type="InterPro" id="IPR017340">
    <property type="entry name" value="U1_snRNP-C"/>
</dbReference>
<dbReference type="InterPro" id="IPR036236">
    <property type="entry name" value="Znf_C2H2_sf"/>
</dbReference>
<dbReference type="PANTHER" id="PTHR31148">
    <property type="entry name" value="U1 SMALL NUCLEAR RIBONUCLEOPROTEIN C"/>
    <property type="match status" value="1"/>
</dbReference>
<dbReference type="PANTHER" id="PTHR31148:SF1">
    <property type="entry name" value="U1 SMALL NUCLEAR RIBONUCLEOPROTEIN C"/>
    <property type="match status" value="1"/>
</dbReference>
<dbReference type="Pfam" id="PF06220">
    <property type="entry name" value="zf-U1"/>
    <property type="match status" value="1"/>
</dbReference>
<dbReference type="PIRSF" id="PIRSF037969">
    <property type="entry name" value="U1_snRNP-C"/>
    <property type="match status" value="1"/>
</dbReference>
<dbReference type="SMART" id="SM00451">
    <property type="entry name" value="ZnF_U1"/>
    <property type="match status" value="1"/>
</dbReference>
<dbReference type="SUPFAM" id="SSF57667">
    <property type="entry name" value="beta-beta-alpha zinc fingers"/>
    <property type="match status" value="1"/>
</dbReference>
<dbReference type="PROSITE" id="PS50171">
    <property type="entry name" value="ZF_MATRIN"/>
    <property type="match status" value="1"/>
</dbReference>
<feature type="chain" id="PRO_0000414274" description="U1 small nuclear ribonucleoprotein C">
    <location>
        <begin position="1"/>
        <end position="192"/>
    </location>
</feature>
<feature type="zinc finger region" description="Matrin-type" evidence="1">
    <location>
        <begin position="4"/>
        <end position="36"/>
    </location>
</feature>
<feature type="region of interest" description="Disordered" evidence="2">
    <location>
        <begin position="118"/>
        <end position="192"/>
    </location>
</feature>
<feature type="compositionally biased region" description="Polar residues" evidence="2">
    <location>
        <begin position="133"/>
        <end position="154"/>
    </location>
</feature>
<feature type="compositionally biased region" description="Low complexity" evidence="2">
    <location>
        <begin position="164"/>
        <end position="173"/>
    </location>
</feature>
<feature type="compositionally biased region" description="Polar residues" evidence="2">
    <location>
        <begin position="174"/>
        <end position="192"/>
    </location>
</feature>
<comment type="function">
    <text evidence="1">Component of the spliceosomal U1 snRNP, which is essential for recognition of the pre-mRNA 5' splice-site and the subsequent assembly of the spliceosome. U1-C is directly involved in initial 5' splice-site recognition for both constitutive and regulated alternative splicing. The interaction with the 5' splice-site seems to precede base-pairing between the pre-mRNA and the U1 snRNA. Stimulates commitment or early (E) complex formation by stabilizing the base pairing of the 5' end of the U1 snRNA and the 5' splice-site region.</text>
</comment>
<comment type="subunit">
    <text evidence="1">U1 snRNP is composed of the 7 core Sm proteins B/B', D1, D2, D3, E, F and G that assemble in a heptameric protein ring on the Sm site of the small nuclear RNA to form the core snRNP, and at least 3 U1 snRNP-specific proteins U1-70K, U1-A and U1-C. U1-C interacts with U1 snRNA and the 5' splice-site region of the pre-mRNA.</text>
</comment>
<comment type="subcellular location">
    <subcellularLocation>
        <location evidence="1">Nucleus</location>
    </subcellularLocation>
</comment>
<comment type="similarity">
    <text evidence="1">Belongs to the U1 small nuclear ribonucleoprotein C family.</text>
</comment>
<accession>Q4XRM7</accession>
<accession>A0A077TUW2</accession>
<organism evidence="4">
    <name type="scientific">Plasmodium chabaudi chabaudi</name>
    <dbReference type="NCBI Taxonomy" id="31271"/>
    <lineage>
        <taxon>Eukaryota</taxon>
        <taxon>Sar</taxon>
        <taxon>Alveolata</taxon>
        <taxon>Apicomplexa</taxon>
        <taxon>Aconoidasida</taxon>
        <taxon>Haemosporida</taxon>
        <taxon>Plasmodiidae</taxon>
        <taxon>Plasmodium</taxon>
        <taxon>Plasmodium (Vinckeia)</taxon>
    </lineage>
</organism>
<reference evidence="4" key="1">
    <citation type="journal article" date="2014" name="BMC Biol.">
        <title>A comprehensive evaluation of rodent malaria parasite genomes and gene expression.</title>
        <authorList>
            <person name="Otto T.D."/>
            <person name="Bohme U."/>
            <person name="Jackson A.P."/>
            <person name="Hunt M."/>
            <person name="Franke-Fayard B."/>
            <person name="Hoeijmakers W.A."/>
            <person name="Religa A.A."/>
            <person name="Robertson L."/>
            <person name="Sanders M."/>
            <person name="Ogun S.A."/>
            <person name="Cunningham D."/>
            <person name="Erhart A."/>
            <person name="Billker O."/>
            <person name="Khan S.M."/>
            <person name="Stunnenberg H.G."/>
            <person name="Langhorne J."/>
            <person name="Holder A.A."/>
            <person name="Waters A.P."/>
            <person name="Newbold C.I."/>
            <person name="Pain A."/>
            <person name="Berriman M."/>
            <person name="Janse C.J."/>
        </authorList>
    </citation>
    <scope>NUCLEOTIDE SEQUENCE [LARGE SCALE GENOMIC DNA]</scope>
    <source>
        <strain evidence="4">AS</strain>
    </source>
</reference>
<reference evidence="5" key="2">
    <citation type="submission" date="2016-08" db="EMBL/GenBank/DDBJ databases">
        <authorList>
            <consortium name="Pathogen Informatics"/>
        </authorList>
    </citation>
    <scope>NUCLEOTIDE SEQUENCE [LARGE SCALE GENOMIC DNA]</scope>
    <source>
        <strain>AJ</strain>
        <strain evidence="5">CB</strain>
    </source>
</reference>
<keyword id="KW-0479">Metal-binding</keyword>
<keyword id="KW-0539">Nucleus</keyword>
<keyword id="KW-0687">Ribonucleoprotein</keyword>
<keyword id="KW-0694">RNA-binding</keyword>
<keyword id="KW-0862">Zinc</keyword>
<keyword id="KW-0863">Zinc-finger</keyword>
<name>RU1C_PLACU</name>
<evidence type="ECO:0000255" key="1">
    <source>
        <dbReference type="HAMAP-Rule" id="MF_03153"/>
    </source>
</evidence>
<evidence type="ECO:0000256" key="2">
    <source>
        <dbReference type="SAM" id="MobiDB-lite"/>
    </source>
</evidence>
<evidence type="ECO:0000312" key="3">
    <source>
        <dbReference type="EMBL" id="VTZ70943.1"/>
    </source>
</evidence>
<evidence type="ECO:0000312" key="4">
    <source>
        <dbReference type="Proteomes" id="UP000071118"/>
    </source>
</evidence>
<evidence type="ECO:0000312" key="5">
    <source>
        <dbReference type="Proteomes" id="UP000195489"/>
    </source>
</evidence>
<proteinExistence type="inferred from homology"/>
<gene>
    <name type="ORF">PC000036.04.0</name>
    <name evidence="3" type="ORF">PCHAS_1426600</name>
</gene>